<sequence>MGCCGSSTVDAEEHLDYSGGNVTLVTDQKNWDNTMEEVAEHGKTVVLKFSAIWCTPCRNAAPLFAELSLKYPDIVFVSVDVDEMPELVTQYDVRATPTFIFMKNNEEIDKLVGGNHEDLQEKFEQLNRPKLYDDV</sequence>
<name>TRXH5_ORYSJ</name>
<evidence type="ECO:0000250" key="1"/>
<evidence type="ECO:0000255" key="2"/>
<evidence type="ECO:0000255" key="3">
    <source>
        <dbReference type="PROSITE-ProRule" id="PRU00691"/>
    </source>
</evidence>
<evidence type="ECO:0000305" key="4"/>
<proteinExistence type="evidence at transcript level"/>
<gene>
    <name type="ordered locus">Os05g0480200</name>
    <name type="ordered locus">LOC_Os05g40190</name>
    <name type="ORF">OSJNBa0018K15.18</name>
</gene>
<reference key="1">
    <citation type="journal article" date="2005" name="Mol. Genet. Genomics">
        <title>A fine physical map of the rice chromosome 5.</title>
        <authorList>
            <person name="Cheng C.-H."/>
            <person name="Chung M.C."/>
            <person name="Liu S.-M."/>
            <person name="Chen S.-K."/>
            <person name="Kao F.Y."/>
            <person name="Lin S.-J."/>
            <person name="Hsiao S.-H."/>
            <person name="Tseng I.C."/>
            <person name="Hsing Y.-I.C."/>
            <person name="Wu H.-P."/>
            <person name="Chen C.-S."/>
            <person name="Shaw J.-F."/>
            <person name="Wu J."/>
            <person name="Matsumoto T."/>
            <person name="Sasaki T."/>
            <person name="Chen H.-C."/>
            <person name="Chow T.-Y."/>
        </authorList>
    </citation>
    <scope>NUCLEOTIDE SEQUENCE [LARGE SCALE GENOMIC DNA]</scope>
    <source>
        <strain>cv. Nipponbare</strain>
    </source>
</reference>
<reference key="2">
    <citation type="journal article" date="2005" name="Nature">
        <title>The map-based sequence of the rice genome.</title>
        <authorList>
            <consortium name="International rice genome sequencing project (IRGSP)"/>
        </authorList>
    </citation>
    <scope>NUCLEOTIDE SEQUENCE [LARGE SCALE GENOMIC DNA]</scope>
    <source>
        <strain>cv. Nipponbare</strain>
    </source>
</reference>
<reference key="3">
    <citation type="journal article" date="2008" name="Nucleic Acids Res.">
        <title>The rice annotation project database (RAP-DB): 2008 update.</title>
        <authorList>
            <consortium name="The rice annotation project (RAP)"/>
        </authorList>
    </citation>
    <scope>GENOME REANNOTATION</scope>
    <source>
        <strain>cv. Nipponbare</strain>
    </source>
</reference>
<reference key="4">
    <citation type="journal article" date="2013" name="Rice">
        <title>Improvement of the Oryza sativa Nipponbare reference genome using next generation sequence and optical map data.</title>
        <authorList>
            <person name="Kawahara Y."/>
            <person name="de la Bastide M."/>
            <person name="Hamilton J.P."/>
            <person name="Kanamori H."/>
            <person name="McCombie W.R."/>
            <person name="Ouyang S."/>
            <person name="Schwartz D.C."/>
            <person name="Tanaka T."/>
            <person name="Wu J."/>
            <person name="Zhou S."/>
            <person name="Childs K.L."/>
            <person name="Davidson R.M."/>
            <person name="Lin H."/>
            <person name="Quesada-Ocampo L."/>
            <person name="Vaillancourt B."/>
            <person name="Sakai H."/>
            <person name="Lee S.S."/>
            <person name="Kim J."/>
            <person name="Numa H."/>
            <person name="Itoh T."/>
            <person name="Buell C.R."/>
            <person name="Matsumoto T."/>
        </authorList>
    </citation>
    <scope>GENOME REANNOTATION</scope>
    <source>
        <strain>cv. Nipponbare</strain>
    </source>
</reference>
<reference key="5">
    <citation type="journal article" date="2003" name="Science">
        <title>Collection, mapping, and annotation of over 28,000 cDNA clones from japonica rice.</title>
        <authorList>
            <consortium name="The rice full-length cDNA consortium"/>
        </authorList>
    </citation>
    <scope>NUCLEOTIDE SEQUENCE [LARGE SCALE MRNA]</scope>
    <source>
        <strain>cv. Nipponbare</strain>
    </source>
</reference>
<reference key="6">
    <citation type="journal article" date="2009" name="Mol. Plant">
        <title>Comparative genomic study of the thioredoxin family in photosynthetic organisms with emphasis on Populus trichocarpa.</title>
        <authorList>
            <person name="Chibani K."/>
            <person name="Wingsle G."/>
            <person name="Jacquot J.P."/>
            <person name="Gelhaye E."/>
            <person name="Rouhier N."/>
        </authorList>
    </citation>
    <scope>GENE FAMILY</scope>
    <scope>NOMENCLATURE</scope>
</reference>
<dbReference type="EMBL" id="AC144737">
    <property type="protein sequence ID" value="AAT01375.1"/>
    <property type="molecule type" value="Genomic_DNA"/>
</dbReference>
<dbReference type="EMBL" id="AP008211">
    <property type="protein sequence ID" value="BAF17766.1"/>
    <property type="molecule type" value="Genomic_DNA"/>
</dbReference>
<dbReference type="EMBL" id="AP014961">
    <property type="protein sequence ID" value="BAS94568.1"/>
    <property type="molecule type" value="Genomic_DNA"/>
</dbReference>
<dbReference type="EMBL" id="AK071198">
    <property type="protein sequence ID" value="BAG92367.1"/>
    <property type="molecule type" value="mRNA"/>
</dbReference>
<dbReference type="RefSeq" id="XP_015639269.1">
    <property type="nucleotide sequence ID" value="XM_015783783.1"/>
</dbReference>
<dbReference type="RefSeq" id="XP_015639270.1">
    <property type="nucleotide sequence ID" value="XM_015783784.1"/>
</dbReference>
<dbReference type="SMR" id="Q75GM1"/>
<dbReference type="FunCoup" id="Q75GM1">
    <property type="interactions" value="88"/>
</dbReference>
<dbReference type="STRING" id="39947.Q75GM1"/>
<dbReference type="PaxDb" id="39947-Q75GM1"/>
<dbReference type="EnsemblPlants" id="Os05t0480200-01">
    <property type="protein sequence ID" value="Os05t0480200-01"/>
    <property type="gene ID" value="Os05g0480200"/>
</dbReference>
<dbReference type="Gramene" id="Os05t0480200-01">
    <property type="protein sequence ID" value="Os05t0480200-01"/>
    <property type="gene ID" value="Os05g0480200"/>
</dbReference>
<dbReference type="KEGG" id="dosa:Os05g0480200"/>
<dbReference type="eggNOG" id="KOG0907">
    <property type="taxonomic scope" value="Eukaryota"/>
</dbReference>
<dbReference type="HOGENOM" id="CLU_090389_14_1_1"/>
<dbReference type="InParanoid" id="Q75GM1"/>
<dbReference type="OMA" id="LEPMGCC"/>
<dbReference type="OrthoDB" id="2121326at2759"/>
<dbReference type="Proteomes" id="UP000000763">
    <property type="component" value="Chromosome 5"/>
</dbReference>
<dbReference type="Proteomes" id="UP000059680">
    <property type="component" value="Chromosome 5"/>
</dbReference>
<dbReference type="GO" id="GO:0005737">
    <property type="term" value="C:cytoplasm"/>
    <property type="evidence" value="ECO:0007669"/>
    <property type="project" value="UniProtKB-SubCell"/>
</dbReference>
<dbReference type="CDD" id="cd02947">
    <property type="entry name" value="TRX_family"/>
    <property type="match status" value="1"/>
</dbReference>
<dbReference type="FunFam" id="3.40.30.10:FF:000245">
    <property type="entry name" value="Thioredoxin"/>
    <property type="match status" value="1"/>
</dbReference>
<dbReference type="Gene3D" id="3.40.30.10">
    <property type="entry name" value="Glutaredoxin"/>
    <property type="match status" value="1"/>
</dbReference>
<dbReference type="InterPro" id="IPR036249">
    <property type="entry name" value="Thioredoxin-like_sf"/>
</dbReference>
<dbReference type="InterPro" id="IPR013766">
    <property type="entry name" value="Thioredoxin_domain"/>
</dbReference>
<dbReference type="PANTHER" id="PTHR46115">
    <property type="entry name" value="THIOREDOXIN-LIKE PROTEIN 1"/>
    <property type="match status" value="1"/>
</dbReference>
<dbReference type="Pfam" id="PF00085">
    <property type="entry name" value="Thioredoxin"/>
    <property type="match status" value="1"/>
</dbReference>
<dbReference type="SUPFAM" id="SSF52833">
    <property type="entry name" value="Thioredoxin-like"/>
    <property type="match status" value="1"/>
</dbReference>
<dbReference type="PROSITE" id="PS51352">
    <property type="entry name" value="THIOREDOXIN_2"/>
    <property type="match status" value="1"/>
</dbReference>
<accession>Q75GM1</accession>
<accession>A0A0P0WNW0</accession>
<keyword id="KW-0963">Cytoplasm</keyword>
<keyword id="KW-1015">Disulfide bond</keyword>
<keyword id="KW-0249">Electron transport</keyword>
<keyword id="KW-0676">Redox-active center</keyword>
<keyword id="KW-1185">Reference proteome</keyword>
<keyword id="KW-0813">Transport</keyword>
<protein>
    <recommendedName>
        <fullName>Thioredoxin H5</fullName>
        <shortName>OsTrxh5</shortName>
    </recommendedName>
    <alternativeName>
        <fullName>OsTrx20</fullName>
    </alternativeName>
</protein>
<organism>
    <name type="scientific">Oryza sativa subsp. japonica</name>
    <name type="common">Rice</name>
    <dbReference type="NCBI Taxonomy" id="39947"/>
    <lineage>
        <taxon>Eukaryota</taxon>
        <taxon>Viridiplantae</taxon>
        <taxon>Streptophyta</taxon>
        <taxon>Embryophyta</taxon>
        <taxon>Tracheophyta</taxon>
        <taxon>Spermatophyta</taxon>
        <taxon>Magnoliopsida</taxon>
        <taxon>Liliopsida</taxon>
        <taxon>Poales</taxon>
        <taxon>Poaceae</taxon>
        <taxon>BOP clade</taxon>
        <taxon>Oryzoideae</taxon>
        <taxon>Oryzeae</taxon>
        <taxon>Oryzinae</taxon>
        <taxon>Oryza</taxon>
        <taxon>Oryza sativa</taxon>
    </lineage>
</organism>
<comment type="function">
    <text>Probable thiol-disulfide oxidoreductase that may be involved in the redox regulation of a number of cytosolic enzymes.</text>
</comment>
<comment type="subcellular location">
    <subcellularLocation>
        <location evidence="1">Cytoplasm</location>
    </subcellularLocation>
</comment>
<comment type="similarity">
    <text evidence="4">Belongs to the thioredoxin family. Plant H-type subfamily.</text>
</comment>
<comment type="caution">
    <text evidence="4">The active site contains a CTPC motif which differs from the conserved CGPC motif.</text>
</comment>
<feature type="chain" id="PRO_0000394830" description="Thioredoxin H5">
    <location>
        <begin position="1"/>
        <end position="135"/>
    </location>
</feature>
<feature type="domain" description="Thioredoxin" evidence="3">
    <location>
        <begin position="13"/>
        <end position="128"/>
    </location>
</feature>
<feature type="active site" description="Nucleophile" evidence="2">
    <location>
        <position position="54"/>
    </location>
</feature>
<feature type="active site" description="Nucleophile" evidence="2">
    <location>
        <position position="57"/>
    </location>
</feature>
<feature type="disulfide bond" description="Redox-active" evidence="3">
    <location>
        <begin position="54"/>
        <end position="57"/>
    </location>
</feature>